<protein>
    <recommendedName>
        <fullName evidence="1">DNA-directed RNA polymerase subunit beta''</fullName>
        <ecNumber evidence="1">2.7.7.6</ecNumber>
    </recommendedName>
    <alternativeName>
        <fullName evidence="1">PEP</fullName>
    </alternativeName>
    <alternativeName>
        <fullName evidence="1">Plastid-encoded RNA polymerase subunit beta''</fullName>
        <shortName evidence="1">RNA polymerase subunit beta''</shortName>
    </alternativeName>
</protein>
<evidence type="ECO:0000255" key="1">
    <source>
        <dbReference type="HAMAP-Rule" id="MF_01324"/>
    </source>
</evidence>
<accession>Q85X62</accession>
<comment type="function">
    <text evidence="1">DNA-dependent RNA polymerase catalyzes the transcription of DNA into RNA using the four ribonucleoside triphosphates as substrates.</text>
</comment>
<comment type="catalytic activity">
    <reaction evidence="1">
        <text>RNA(n) + a ribonucleoside 5'-triphosphate = RNA(n+1) + diphosphate</text>
        <dbReference type="Rhea" id="RHEA:21248"/>
        <dbReference type="Rhea" id="RHEA-COMP:14527"/>
        <dbReference type="Rhea" id="RHEA-COMP:17342"/>
        <dbReference type="ChEBI" id="CHEBI:33019"/>
        <dbReference type="ChEBI" id="CHEBI:61557"/>
        <dbReference type="ChEBI" id="CHEBI:140395"/>
        <dbReference type="EC" id="2.7.7.6"/>
    </reaction>
</comment>
<comment type="cofactor">
    <cofactor evidence="1">
        <name>Zn(2+)</name>
        <dbReference type="ChEBI" id="CHEBI:29105"/>
    </cofactor>
    <text evidence="1">Binds 1 Zn(2+) ion per subunit.</text>
</comment>
<comment type="subunit">
    <text evidence="1">In plastids the minimal PEP RNA polymerase catalytic core is composed of four subunits: alpha, beta, beta', and beta''. When a (nuclear-encoded) sigma factor is associated with the core the holoenzyme is formed, which can initiate transcription.</text>
</comment>
<comment type="subcellular location">
    <subcellularLocation>
        <location evidence="1">Plastid</location>
        <location evidence="1">Chloroplast</location>
    </subcellularLocation>
</comment>
<comment type="similarity">
    <text evidence="1">Belongs to the RNA polymerase beta' chain family. RpoC2 subfamily.</text>
</comment>
<keyword id="KW-0150">Chloroplast</keyword>
<keyword id="KW-0240">DNA-directed RNA polymerase</keyword>
<keyword id="KW-0479">Metal-binding</keyword>
<keyword id="KW-0548">Nucleotidyltransferase</keyword>
<keyword id="KW-0934">Plastid</keyword>
<keyword id="KW-0804">Transcription</keyword>
<keyword id="KW-0808">Transferase</keyword>
<keyword id="KW-0862">Zinc</keyword>
<name>RPOC2_PINKO</name>
<gene>
    <name evidence="1" type="primary">rpoC2</name>
</gene>
<dbReference type="EC" id="2.7.7.6" evidence="1"/>
<dbReference type="EMBL" id="AY228468">
    <property type="protein sequence ID" value="AAO74001.1"/>
    <property type="molecule type" value="Genomic_DNA"/>
</dbReference>
<dbReference type="RefSeq" id="NP_817153.1">
    <property type="nucleotide sequence ID" value="NC_004677.2"/>
</dbReference>
<dbReference type="SMR" id="Q85X62"/>
<dbReference type="GeneID" id="806978"/>
<dbReference type="GO" id="GO:0009507">
    <property type="term" value="C:chloroplast"/>
    <property type="evidence" value="ECO:0007669"/>
    <property type="project" value="UniProtKB-SubCell"/>
</dbReference>
<dbReference type="GO" id="GO:0000428">
    <property type="term" value="C:DNA-directed RNA polymerase complex"/>
    <property type="evidence" value="ECO:0007669"/>
    <property type="project" value="UniProtKB-KW"/>
</dbReference>
<dbReference type="GO" id="GO:0005739">
    <property type="term" value="C:mitochondrion"/>
    <property type="evidence" value="ECO:0007669"/>
    <property type="project" value="GOC"/>
</dbReference>
<dbReference type="GO" id="GO:0003677">
    <property type="term" value="F:DNA binding"/>
    <property type="evidence" value="ECO:0007669"/>
    <property type="project" value="UniProtKB-UniRule"/>
</dbReference>
<dbReference type="GO" id="GO:0003899">
    <property type="term" value="F:DNA-directed RNA polymerase activity"/>
    <property type="evidence" value="ECO:0007669"/>
    <property type="project" value="UniProtKB-UniRule"/>
</dbReference>
<dbReference type="GO" id="GO:0008270">
    <property type="term" value="F:zinc ion binding"/>
    <property type="evidence" value="ECO:0007669"/>
    <property type="project" value="UniProtKB-UniRule"/>
</dbReference>
<dbReference type="GO" id="GO:0006351">
    <property type="term" value="P:DNA-templated transcription"/>
    <property type="evidence" value="ECO:0007669"/>
    <property type="project" value="UniProtKB-UniRule"/>
</dbReference>
<dbReference type="CDD" id="cd02655">
    <property type="entry name" value="RNAP_beta'_C"/>
    <property type="match status" value="1"/>
</dbReference>
<dbReference type="Gene3D" id="1.10.132.30">
    <property type="match status" value="1"/>
</dbReference>
<dbReference type="Gene3D" id="1.10.150.390">
    <property type="match status" value="1"/>
</dbReference>
<dbReference type="Gene3D" id="1.10.1790.20">
    <property type="match status" value="1"/>
</dbReference>
<dbReference type="Gene3D" id="1.10.274.100">
    <property type="entry name" value="RNA polymerase Rpb1, domain 3"/>
    <property type="match status" value="1"/>
</dbReference>
<dbReference type="HAMAP" id="MF_01324">
    <property type="entry name" value="RNApol_bact_RpoC2"/>
    <property type="match status" value="1"/>
</dbReference>
<dbReference type="InterPro" id="IPR012756">
    <property type="entry name" value="DNA-dir_RpoC2_beta_pp"/>
</dbReference>
<dbReference type="InterPro" id="IPR050254">
    <property type="entry name" value="RNA_pol_beta''_euk"/>
</dbReference>
<dbReference type="InterPro" id="IPR042102">
    <property type="entry name" value="RNA_pol_Rpb1_3_sf"/>
</dbReference>
<dbReference type="InterPro" id="IPR007083">
    <property type="entry name" value="RNA_pol_Rpb1_4"/>
</dbReference>
<dbReference type="InterPro" id="IPR007081">
    <property type="entry name" value="RNA_pol_Rpb1_5"/>
</dbReference>
<dbReference type="InterPro" id="IPR038120">
    <property type="entry name" value="Rpb1_funnel_sf"/>
</dbReference>
<dbReference type="NCBIfam" id="TIGR02388">
    <property type="entry name" value="rpoC2_cyan"/>
    <property type="match status" value="1"/>
</dbReference>
<dbReference type="PANTHER" id="PTHR34995">
    <property type="entry name" value="DNA-DIRECTED RNA POLYMERASE SUBUNIT BETA"/>
    <property type="match status" value="1"/>
</dbReference>
<dbReference type="PANTHER" id="PTHR34995:SF1">
    <property type="entry name" value="DNA-DIRECTED RNA POLYMERASE SUBUNIT BETA"/>
    <property type="match status" value="1"/>
</dbReference>
<dbReference type="Pfam" id="PF05000">
    <property type="entry name" value="RNA_pol_Rpb1_4"/>
    <property type="match status" value="1"/>
</dbReference>
<dbReference type="Pfam" id="PF04998">
    <property type="entry name" value="RNA_pol_Rpb1_5"/>
    <property type="match status" value="2"/>
</dbReference>
<dbReference type="SUPFAM" id="SSF64484">
    <property type="entry name" value="beta and beta-prime subunits of DNA dependent RNA-polymerase"/>
    <property type="match status" value="1"/>
</dbReference>
<sequence>MKIWRFLLMKKQTRLPFDNLPFYNKVMDKTAIKKLISRLIDHFGMTYTSHILDQLKTSGFKQATDTAISLGIDDLLTAPSKGWLVQDAEQQGSVSEKQNHYGNLHAVEKLRQSIEIWYATSEYLRKEMNTNFSMTDPLNPVHVMSFSGARGNTSQVHQLVGMRGLMSDPQGQIIDLPIRRNLREGLSLTEYIISCYGARKGVVDTAVRTADAGYLTRRLVEVVQQIVVRRTDCGTVQGIFVSPIRGRERDINEVVVRTQILIGRVLADDVYINRRCIATRNQDIGVGLANQLRNIRPRPIYIRTPFTCKSISRICQLCYGRSTTHSHLIELGEAVGIIAGQSIGEPGTQLTLRTFHTGGVFTGDIAEHIRAPFNGKIEFNENLVYPTRTRNGHPAYLCHNNLSITIDGQNQVQNLTIPPQSLLLVQNDQYVESEQIIAEVRARTSSFKEKVRKNIYSDLEGEMHWSTNVCHAPEYVHGNVHSILRTGYLWILSGGIYGSGVVPFPFHKYQDQVDVQPFVAKHTDSYVDQVEHRSGDSNCYGKEEQIFSYSETETDRTISNEHRDSIYVTFSPKNYNMKGKKQMNRFIVSLQCDKEWGKRIIPCPDAILRIPKSGILQINSIFGYSNVEHGIPDGPNMTTPFSLDLSREGDNLQIQISNSILYEDGERIQVMSDTSIPLVRTCLGFDWEQIDSIESEAYVSLISVRTNKIVNNMVQISLMKYPPFFMGRRDNKASSNLMFHNNLDHTNLFSSNGASQLISKHQGTICSLSNGEEDSGSFMVLSPSDCFRIVLFNDSKCYDTGNKSNRKDPMRKIIEFSGLLGHLHSITSRFPSSQFITDKKVLSKKHSIFHNYFMDENMRISHFDPCRNIISNLLGPNWCSSSSEFCKKTFPVVSLGQLIPESVWISEDEPLPESGQIIAVDEESLVIRSAKPYLATRKATVHGHYGEILDKGDTLITLIYERLKSSDIIQGLPKVEQLSEARLNNSISMNLKESFENWTGDMTRFLGSLWGLFISARITMEQSQIHLVNQIQKVYRSQGVRIGDKHIEIIVRQMTSKVLISEDGTANVFSPGELIGLSRAQRMDRALEETIYYQTMLLGITRASLNTQSFISEASFQETARVLAKAALQGRIDWLKGLKENVILGGMIPAGTGQHIHRSGKRNGIDPRIGNRNLFSNKVKDILFHHDKVSFFSIQENYHNILKQPLKES</sequence>
<organism>
    <name type="scientific">Pinus koraiensis</name>
    <name type="common">Korean pine</name>
    <dbReference type="NCBI Taxonomy" id="88728"/>
    <lineage>
        <taxon>Eukaryota</taxon>
        <taxon>Viridiplantae</taxon>
        <taxon>Streptophyta</taxon>
        <taxon>Embryophyta</taxon>
        <taxon>Tracheophyta</taxon>
        <taxon>Spermatophyta</taxon>
        <taxon>Pinopsida</taxon>
        <taxon>Pinidae</taxon>
        <taxon>Conifers I</taxon>
        <taxon>Pinales</taxon>
        <taxon>Pinaceae</taxon>
        <taxon>Pinus</taxon>
        <taxon>Pinus subgen. Strobus</taxon>
    </lineage>
</organism>
<proteinExistence type="inferred from homology"/>
<reference key="1">
    <citation type="submission" date="2003-02" db="EMBL/GenBank/DDBJ databases">
        <title>Complete nucleotide sequence of Pinus koraiensis.</title>
        <authorList>
            <person name="Noh E.W."/>
            <person name="Lee J.S."/>
            <person name="Choi Y.I."/>
            <person name="Han M.S."/>
            <person name="Yi Y.S."/>
            <person name="Han S.U."/>
        </authorList>
    </citation>
    <scope>NUCLEOTIDE SEQUENCE [LARGE SCALE GENOMIC DNA]</scope>
    <source>
        <strain>KangWon16</strain>
    </source>
</reference>
<geneLocation type="chloroplast"/>
<feature type="chain" id="PRO_0000067941" description="DNA-directed RNA polymerase subunit beta''">
    <location>
        <begin position="1"/>
        <end position="1209"/>
    </location>
</feature>
<feature type="binding site" evidence="1">
    <location>
        <position position="233"/>
    </location>
    <ligand>
        <name>Zn(2+)</name>
        <dbReference type="ChEBI" id="CHEBI:29105"/>
    </ligand>
</feature>
<feature type="binding site" evidence="1">
    <location>
        <position position="308"/>
    </location>
    <ligand>
        <name>Zn(2+)</name>
        <dbReference type="ChEBI" id="CHEBI:29105"/>
    </ligand>
</feature>
<feature type="binding site" evidence="1">
    <location>
        <position position="315"/>
    </location>
    <ligand>
        <name>Zn(2+)</name>
        <dbReference type="ChEBI" id="CHEBI:29105"/>
    </ligand>
</feature>
<feature type="binding site" evidence="1">
    <location>
        <position position="318"/>
    </location>
    <ligand>
        <name>Zn(2+)</name>
        <dbReference type="ChEBI" id="CHEBI:29105"/>
    </ligand>
</feature>